<dbReference type="EC" id="2.7.2.11" evidence="1"/>
<dbReference type="EMBL" id="CP000407">
    <property type="protein sequence ID" value="ABP89523.1"/>
    <property type="molecule type" value="Genomic_DNA"/>
</dbReference>
<dbReference type="SMR" id="A4VTT4"/>
<dbReference type="STRING" id="391295.SSU05_0557"/>
<dbReference type="KEGG" id="ssu:SSU05_0557"/>
<dbReference type="eggNOG" id="COG0263">
    <property type="taxonomic scope" value="Bacteria"/>
</dbReference>
<dbReference type="HOGENOM" id="CLU_025400_2_0_9"/>
<dbReference type="UniPathway" id="UPA00098">
    <property type="reaction ID" value="UER00359"/>
</dbReference>
<dbReference type="GO" id="GO:0005829">
    <property type="term" value="C:cytosol"/>
    <property type="evidence" value="ECO:0007669"/>
    <property type="project" value="TreeGrafter"/>
</dbReference>
<dbReference type="GO" id="GO:0005524">
    <property type="term" value="F:ATP binding"/>
    <property type="evidence" value="ECO:0007669"/>
    <property type="project" value="UniProtKB-KW"/>
</dbReference>
<dbReference type="GO" id="GO:0004349">
    <property type="term" value="F:glutamate 5-kinase activity"/>
    <property type="evidence" value="ECO:0007669"/>
    <property type="project" value="UniProtKB-UniRule"/>
</dbReference>
<dbReference type="GO" id="GO:0003723">
    <property type="term" value="F:RNA binding"/>
    <property type="evidence" value="ECO:0007669"/>
    <property type="project" value="InterPro"/>
</dbReference>
<dbReference type="GO" id="GO:0055129">
    <property type="term" value="P:L-proline biosynthetic process"/>
    <property type="evidence" value="ECO:0007669"/>
    <property type="project" value="UniProtKB-UniRule"/>
</dbReference>
<dbReference type="CDD" id="cd04242">
    <property type="entry name" value="AAK_G5K_ProB"/>
    <property type="match status" value="1"/>
</dbReference>
<dbReference type="CDD" id="cd21157">
    <property type="entry name" value="PUA_G5K"/>
    <property type="match status" value="1"/>
</dbReference>
<dbReference type="FunFam" id="3.40.1160.10:FF:000018">
    <property type="entry name" value="Glutamate 5-kinase"/>
    <property type="match status" value="1"/>
</dbReference>
<dbReference type="Gene3D" id="3.40.1160.10">
    <property type="entry name" value="Acetylglutamate kinase-like"/>
    <property type="match status" value="1"/>
</dbReference>
<dbReference type="Gene3D" id="2.30.130.10">
    <property type="entry name" value="PUA domain"/>
    <property type="match status" value="1"/>
</dbReference>
<dbReference type="HAMAP" id="MF_00456">
    <property type="entry name" value="ProB"/>
    <property type="match status" value="1"/>
</dbReference>
<dbReference type="InterPro" id="IPR036393">
    <property type="entry name" value="AceGlu_kinase-like_sf"/>
</dbReference>
<dbReference type="InterPro" id="IPR001048">
    <property type="entry name" value="Asp/Glu/Uridylate_kinase"/>
</dbReference>
<dbReference type="InterPro" id="IPR041739">
    <property type="entry name" value="G5K_ProB"/>
</dbReference>
<dbReference type="InterPro" id="IPR001057">
    <property type="entry name" value="Glu/AcGlu_kinase"/>
</dbReference>
<dbReference type="InterPro" id="IPR011529">
    <property type="entry name" value="Glu_5kinase"/>
</dbReference>
<dbReference type="InterPro" id="IPR005715">
    <property type="entry name" value="Glu_5kinase/COase_Synthase"/>
</dbReference>
<dbReference type="InterPro" id="IPR019797">
    <property type="entry name" value="Glutamate_5-kinase_CS"/>
</dbReference>
<dbReference type="InterPro" id="IPR002478">
    <property type="entry name" value="PUA"/>
</dbReference>
<dbReference type="InterPro" id="IPR015947">
    <property type="entry name" value="PUA-like_sf"/>
</dbReference>
<dbReference type="InterPro" id="IPR036974">
    <property type="entry name" value="PUA_sf"/>
</dbReference>
<dbReference type="NCBIfam" id="TIGR01027">
    <property type="entry name" value="proB"/>
    <property type="match status" value="1"/>
</dbReference>
<dbReference type="PANTHER" id="PTHR43654">
    <property type="entry name" value="GLUTAMATE 5-KINASE"/>
    <property type="match status" value="1"/>
</dbReference>
<dbReference type="PANTHER" id="PTHR43654:SF1">
    <property type="entry name" value="ISOPENTENYL PHOSPHATE KINASE"/>
    <property type="match status" value="1"/>
</dbReference>
<dbReference type="Pfam" id="PF00696">
    <property type="entry name" value="AA_kinase"/>
    <property type="match status" value="1"/>
</dbReference>
<dbReference type="Pfam" id="PF01472">
    <property type="entry name" value="PUA"/>
    <property type="match status" value="1"/>
</dbReference>
<dbReference type="PIRSF" id="PIRSF000729">
    <property type="entry name" value="GK"/>
    <property type="match status" value="1"/>
</dbReference>
<dbReference type="PRINTS" id="PR00474">
    <property type="entry name" value="GLU5KINASE"/>
</dbReference>
<dbReference type="SMART" id="SM00359">
    <property type="entry name" value="PUA"/>
    <property type="match status" value="1"/>
</dbReference>
<dbReference type="SUPFAM" id="SSF53633">
    <property type="entry name" value="Carbamate kinase-like"/>
    <property type="match status" value="1"/>
</dbReference>
<dbReference type="SUPFAM" id="SSF88697">
    <property type="entry name" value="PUA domain-like"/>
    <property type="match status" value="1"/>
</dbReference>
<dbReference type="PROSITE" id="PS00902">
    <property type="entry name" value="GLUTAMATE_5_KINASE"/>
    <property type="match status" value="1"/>
</dbReference>
<dbReference type="PROSITE" id="PS50890">
    <property type="entry name" value="PUA"/>
    <property type="match status" value="1"/>
</dbReference>
<accession>A4VTT4</accession>
<feature type="chain" id="PRO_1000081114" description="Glutamate 5-kinase">
    <location>
        <begin position="1"/>
        <end position="358"/>
    </location>
</feature>
<feature type="domain" description="PUA" evidence="1">
    <location>
        <begin position="275"/>
        <end position="353"/>
    </location>
</feature>
<feature type="binding site" evidence="1">
    <location>
        <position position="9"/>
    </location>
    <ligand>
        <name>ATP</name>
        <dbReference type="ChEBI" id="CHEBI:30616"/>
    </ligand>
</feature>
<feature type="binding site" evidence="1">
    <location>
        <position position="49"/>
    </location>
    <ligand>
        <name>substrate</name>
    </ligand>
</feature>
<feature type="binding site" evidence="1">
    <location>
        <position position="136"/>
    </location>
    <ligand>
        <name>substrate</name>
    </ligand>
</feature>
<feature type="binding site" evidence="1">
    <location>
        <position position="148"/>
    </location>
    <ligand>
        <name>substrate</name>
    </ligand>
</feature>
<feature type="binding site" evidence="1">
    <location>
        <begin position="168"/>
        <end position="169"/>
    </location>
    <ligand>
        <name>ATP</name>
        <dbReference type="ChEBI" id="CHEBI:30616"/>
    </ligand>
</feature>
<feature type="binding site" evidence="1">
    <location>
        <begin position="210"/>
        <end position="216"/>
    </location>
    <ligand>
        <name>ATP</name>
        <dbReference type="ChEBI" id="CHEBI:30616"/>
    </ligand>
</feature>
<comment type="function">
    <text evidence="1">Catalyzes the transfer of a phosphate group to glutamate to form L-glutamate 5-phosphate.</text>
</comment>
<comment type="catalytic activity">
    <reaction evidence="1">
        <text>L-glutamate + ATP = L-glutamyl 5-phosphate + ADP</text>
        <dbReference type="Rhea" id="RHEA:14877"/>
        <dbReference type="ChEBI" id="CHEBI:29985"/>
        <dbReference type="ChEBI" id="CHEBI:30616"/>
        <dbReference type="ChEBI" id="CHEBI:58274"/>
        <dbReference type="ChEBI" id="CHEBI:456216"/>
        <dbReference type="EC" id="2.7.2.11"/>
    </reaction>
</comment>
<comment type="pathway">
    <text evidence="1">Amino-acid biosynthesis; L-proline biosynthesis; L-glutamate 5-semialdehyde from L-glutamate: step 1/2.</text>
</comment>
<comment type="subcellular location">
    <subcellularLocation>
        <location evidence="1">Cytoplasm</location>
    </subcellularLocation>
</comment>
<comment type="similarity">
    <text evidence="1">Belongs to the glutamate 5-kinase family.</text>
</comment>
<sequence length="358" mass="38616">MTEKTIVFKVGTSSLTQENGSLDRIKIARITNQLAQLHQKGYQIVLVTSGSIAAGFRRLGFDKRPTKIAEKQASAAVGQGLLIEEYTQNLMKDGIVSAQILLTQDDFADARRYQNASQALQVLLKQRAIPIINENDTIAIEEIKVGDNDTLSAQVASLLKADLLVLLTDVDGLYTANPNSDPTAQHLPQIKEITEDLFAMAAGAGSSNGTGGMTTKLQAAQIATKSGVPVFICSSKEDTALLQAVTQANRGTLFLADDHAMNQRKQWMAFYARTDAAVEVDAGAVDAMLHQGRSLLATGVKALEGDFEVGQVVEVYSQADHRLIGKGRVKLSSKDLQDQLANGRAEGVLIHRNDWVSL</sequence>
<evidence type="ECO:0000255" key="1">
    <source>
        <dbReference type="HAMAP-Rule" id="MF_00456"/>
    </source>
</evidence>
<keyword id="KW-0028">Amino-acid biosynthesis</keyword>
<keyword id="KW-0067">ATP-binding</keyword>
<keyword id="KW-0963">Cytoplasm</keyword>
<keyword id="KW-0418">Kinase</keyword>
<keyword id="KW-0547">Nucleotide-binding</keyword>
<keyword id="KW-0641">Proline biosynthesis</keyword>
<keyword id="KW-0808">Transferase</keyword>
<name>PROB_STRSY</name>
<gene>
    <name evidence="1" type="primary">proB</name>
    <name type="ordered locus">SSU05_0557</name>
</gene>
<proteinExistence type="inferred from homology"/>
<protein>
    <recommendedName>
        <fullName evidence="1">Glutamate 5-kinase</fullName>
        <ecNumber evidence="1">2.7.2.11</ecNumber>
    </recommendedName>
    <alternativeName>
        <fullName evidence="1">Gamma-glutamyl kinase</fullName>
        <shortName evidence="1">GK</shortName>
    </alternativeName>
</protein>
<reference key="1">
    <citation type="journal article" date="2007" name="PLoS ONE">
        <title>A glimpse of streptococcal toxic shock syndrome from comparative genomics of S. suis 2 Chinese isolates.</title>
        <authorList>
            <person name="Chen C."/>
            <person name="Tang J."/>
            <person name="Dong W."/>
            <person name="Wang C."/>
            <person name="Feng Y."/>
            <person name="Wang J."/>
            <person name="Zheng F."/>
            <person name="Pan X."/>
            <person name="Liu D."/>
            <person name="Li M."/>
            <person name="Song Y."/>
            <person name="Zhu X."/>
            <person name="Sun H."/>
            <person name="Feng T."/>
            <person name="Guo Z."/>
            <person name="Ju A."/>
            <person name="Ge J."/>
            <person name="Dong Y."/>
            <person name="Sun W."/>
            <person name="Jiang Y."/>
            <person name="Wang J."/>
            <person name="Yan J."/>
            <person name="Yang H."/>
            <person name="Wang X."/>
            <person name="Gao G.F."/>
            <person name="Yang R."/>
            <person name="Wang J."/>
            <person name="Yu J."/>
        </authorList>
    </citation>
    <scope>NUCLEOTIDE SEQUENCE [LARGE SCALE GENOMIC DNA]</scope>
    <source>
        <strain>05ZYH33</strain>
    </source>
</reference>
<organism>
    <name type="scientific">Streptococcus suis (strain 05ZYH33)</name>
    <dbReference type="NCBI Taxonomy" id="391295"/>
    <lineage>
        <taxon>Bacteria</taxon>
        <taxon>Bacillati</taxon>
        <taxon>Bacillota</taxon>
        <taxon>Bacilli</taxon>
        <taxon>Lactobacillales</taxon>
        <taxon>Streptococcaceae</taxon>
        <taxon>Streptococcus</taxon>
    </lineage>
</organism>